<gene>
    <name evidence="1" type="primary">rplC</name>
    <name type="ordered locus">SAR2335</name>
</gene>
<evidence type="ECO:0000255" key="1">
    <source>
        <dbReference type="HAMAP-Rule" id="MF_01325"/>
    </source>
</evidence>
<evidence type="ECO:0000256" key="2">
    <source>
        <dbReference type="SAM" id="MobiDB-lite"/>
    </source>
</evidence>
<evidence type="ECO:0000305" key="3"/>
<dbReference type="EMBL" id="BX571856">
    <property type="protein sequence ID" value="CAG41316.1"/>
    <property type="molecule type" value="Genomic_DNA"/>
</dbReference>
<dbReference type="RefSeq" id="WP_000160212.1">
    <property type="nucleotide sequence ID" value="NC_002952.2"/>
</dbReference>
<dbReference type="SMR" id="Q6GEI3"/>
<dbReference type="GeneID" id="98346562"/>
<dbReference type="KEGG" id="sar:SAR2335"/>
<dbReference type="HOGENOM" id="CLU_044142_4_1_9"/>
<dbReference type="Proteomes" id="UP000000596">
    <property type="component" value="Chromosome"/>
</dbReference>
<dbReference type="GO" id="GO:0022625">
    <property type="term" value="C:cytosolic large ribosomal subunit"/>
    <property type="evidence" value="ECO:0007669"/>
    <property type="project" value="TreeGrafter"/>
</dbReference>
<dbReference type="GO" id="GO:0019843">
    <property type="term" value="F:rRNA binding"/>
    <property type="evidence" value="ECO:0007669"/>
    <property type="project" value="UniProtKB-UniRule"/>
</dbReference>
<dbReference type="GO" id="GO:0003735">
    <property type="term" value="F:structural constituent of ribosome"/>
    <property type="evidence" value="ECO:0007669"/>
    <property type="project" value="InterPro"/>
</dbReference>
<dbReference type="GO" id="GO:0006412">
    <property type="term" value="P:translation"/>
    <property type="evidence" value="ECO:0007669"/>
    <property type="project" value="UniProtKB-UniRule"/>
</dbReference>
<dbReference type="FunFam" id="2.40.30.10:FF:000004">
    <property type="entry name" value="50S ribosomal protein L3"/>
    <property type="match status" value="1"/>
</dbReference>
<dbReference type="FunFam" id="3.30.160.810:FF:000002">
    <property type="entry name" value="50S ribosomal protein L3"/>
    <property type="match status" value="1"/>
</dbReference>
<dbReference type="Gene3D" id="3.30.160.810">
    <property type="match status" value="1"/>
</dbReference>
<dbReference type="Gene3D" id="2.40.30.10">
    <property type="entry name" value="Translation factors"/>
    <property type="match status" value="1"/>
</dbReference>
<dbReference type="HAMAP" id="MF_01325_B">
    <property type="entry name" value="Ribosomal_uL3_B"/>
    <property type="match status" value="1"/>
</dbReference>
<dbReference type="InterPro" id="IPR000597">
    <property type="entry name" value="Ribosomal_uL3"/>
</dbReference>
<dbReference type="InterPro" id="IPR019927">
    <property type="entry name" value="Ribosomal_uL3_bac/org-type"/>
</dbReference>
<dbReference type="InterPro" id="IPR019926">
    <property type="entry name" value="Ribosomal_uL3_CS"/>
</dbReference>
<dbReference type="InterPro" id="IPR009000">
    <property type="entry name" value="Transl_B-barrel_sf"/>
</dbReference>
<dbReference type="NCBIfam" id="TIGR03625">
    <property type="entry name" value="L3_bact"/>
    <property type="match status" value="1"/>
</dbReference>
<dbReference type="PANTHER" id="PTHR11229">
    <property type="entry name" value="50S RIBOSOMAL PROTEIN L3"/>
    <property type="match status" value="1"/>
</dbReference>
<dbReference type="PANTHER" id="PTHR11229:SF16">
    <property type="entry name" value="LARGE RIBOSOMAL SUBUNIT PROTEIN UL3C"/>
    <property type="match status" value="1"/>
</dbReference>
<dbReference type="Pfam" id="PF00297">
    <property type="entry name" value="Ribosomal_L3"/>
    <property type="match status" value="1"/>
</dbReference>
<dbReference type="SUPFAM" id="SSF50447">
    <property type="entry name" value="Translation proteins"/>
    <property type="match status" value="1"/>
</dbReference>
<dbReference type="PROSITE" id="PS00474">
    <property type="entry name" value="RIBOSOMAL_L3"/>
    <property type="match status" value="1"/>
</dbReference>
<name>RL3_STAAR</name>
<protein>
    <recommendedName>
        <fullName evidence="1">Large ribosomal subunit protein uL3</fullName>
    </recommendedName>
    <alternativeName>
        <fullName evidence="3">50S ribosomal protein L3</fullName>
    </alternativeName>
</protein>
<comment type="function">
    <text evidence="1">One of the primary rRNA binding proteins, it binds directly near the 3'-end of the 23S rRNA, where it nucleates assembly of the 50S subunit.</text>
</comment>
<comment type="subunit">
    <text evidence="1">Part of the 50S ribosomal subunit. Forms a cluster with proteins L14 and L19.</text>
</comment>
<comment type="similarity">
    <text evidence="1">Belongs to the universal ribosomal protein uL3 family.</text>
</comment>
<reference key="1">
    <citation type="journal article" date="2004" name="Proc. Natl. Acad. Sci. U.S.A.">
        <title>Complete genomes of two clinical Staphylococcus aureus strains: evidence for the rapid evolution of virulence and drug resistance.</title>
        <authorList>
            <person name="Holden M.T.G."/>
            <person name="Feil E.J."/>
            <person name="Lindsay J.A."/>
            <person name="Peacock S.J."/>
            <person name="Day N.P.J."/>
            <person name="Enright M.C."/>
            <person name="Foster T.J."/>
            <person name="Moore C.E."/>
            <person name="Hurst L."/>
            <person name="Atkin R."/>
            <person name="Barron A."/>
            <person name="Bason N."/>
            <person name="Bentley S.D."/>
            <person name="Chillingworth C."/>
            <person name="Chillingworth T."/>
            <person name="Churcher C."/>
            <person name="Clark L."/>
            <person name="Corton C."/>
            <person name="Cronin A."/>
            <person name="Doggett J."/>
            <person name="Dowd L."/>
            <person name="Feltwell T."/>
            <person name="Hance Z."/>
            <person name="Harris B."/>
            <person name="Hauser H."/>
            <person name="Holroyd S."/>
            <person name="Jagels K."/>
            <person name="James K.D."/>
            <person name="Lennard N."/>
            <person name="Line A."/>
            <person name="Mayes R."/>
            <person name="Moule S."/>
            <person name="Mungall K."/>
            <person name="Ormond D."/>
            <person name="Quail M.A."/>
            <person name="Rabbinowitsch E."/>
            <person name="Rutherford K.M."/>
            <person name="Sanders M."/>
            <person name="Sharp S."/>
            <person name="Simmonds M."/>
            <person name="Stevens K."/>
            <person name="Whitehead S."/>
            <person name="Barrell B.G."/>
            <person name="Spratt B.G."/>
            <person name="Parkhill J."/>
        </authorList>
    </citation>
    <scope>NUCLEOTIDE SEQUENCE [LARGE SCALE GENOMIC DNA]</scope>
    <source>
        <strain>MRSA252</strain>
    </source>
</reference>
<sequence>MTKGILGRKIGMTQVFGENGELIPVTVVEAKENVVLQKKTVEVDGYNAIQVGFEDKKAYKKDAKSNKYANKPAEGHAKKADAAPKRFIREFRNVDVDAYEVGQEVSVDTFVAGDVIDVTGVSKGKGFQGAIKRHGQSRGPMSHGSHFHRAPGSVGMASDASRVFKGQKMPGRMGGNTVTVQNLEVVQVDTENKVILVKGNVPGPKKGLVEIRTSIKKGNK</sequence>
<feature type="chain" id="PRO_0000077156" description="Large ribosomal subunit protein uL3">
    <location>
        <begin position="1"/>
        <end position="220"/>
    </location>
</feature>
<feature type="region of interest" description="Disordered" evidence="2">
    <location>
        <begin position="130"/>
        <end position="156"/>
    </location>
</feature>
<keyword id="KW-0687">Ribonucleoprotein</keyword>
<keyword id="KW-0689">Ribosomal protein</keyword>
<keyword id="KW-0694">RNA-binding</keyword>
<keyword id="KW-0699">rRNA-binding</keyword>
<proteinExistence type="inferred from homology"/>
<organism>
    <name type="scientific">Staphylococcus aureus (strain MRSA252)</name>
    <dbReference type="NCBI Taxonomy" id="282458"/>
    <lineage>
        <taxon>Bacteria</taxon>
        <taxon>Bacillati</taxon>
        <taxon>Bacillota</taxon>
        <taxon>Bacilli</taxon>
        <taxon>Bacillales</taxon>
        <taxon>Staphylococcaceae</taxon>
        <taxon>Staphylococcus</taxon>
    </lineage>
</organism>
<accession>Q6GEI3</accession>